<name>RL22_BRUAB</name>
<accession>Q57CR3</accession>
<dbReference type="EMBL" id="AE017223">
    <property type="protein sequence ID" value="AAX74571.1"/>
    <property type="molecule type" value="Genomic_DNA"/>
</dbReference>
<dbReference type="RefSeq" id="WP_002964357.1">
    <property type="nucleotide sequence ID" value="NC_006932.1"/>
</dbReference>
<dbReference type="SMR" id="Q57CR3"/>
<dbReference type="EnsemblBacteria" id="AAX74571">
    <property type="protein sequence ID" value="AAX74571"/>
    <property type="gene ID" value="BruAb1_1233"/>
</dbReference>
<dbReference type="GeneID" id="93016444"/>
<dbReference type="KEGG" id="bmb:BruAb1_1233"/>
<dbReference type="HOGENOM" id="CLU_083987_3_0_5"/>
<dbReference type="Proteomes" id="UP000000540">
    <property type="component" value="Chromosome I"/>
</dbReference>
<dbReference type="GO" id="GO:0022625">
    <property type="term" value="C:cytosolic large ribosomal subunit"/>
    <property type="evidence" value="ECO:0007669"/>
    <property type="project" value="TreeGrafter"/>
</dbReference>
<dbReference type="GO" id="GO:0019843">
    <property type="term" value="F:rRNA binding"/>
    <property type="evidence" value="ECO:0007669"/>
    <property type="project" value="UniProtKB-UniRule"/>
</dbReference>
<dbReference type="GO" id="GO:0003735">
    <property type="term" value="F:structural constituent of ribosome"/>
    <property type="evidence" value="ECO:0007669"/>
    <property type="project" value="InterPro"/>
</dbReference>
<dbReference type="GO" id="GO:0006412">
    <property type="term" value="P:translation"/>
    <property type="evidence" value="ECO:0007669"/>
    <property type="project" value="UniProtKB-UniRule"/>
</dbReference>
<dbReference type="CDD" id="cd00336">
    <property type="entry name" value="Ribosomal_L22"/>
    <property type="match status" value="1"/>
</dbReference>
<dbReference type="Gene3D" id="3.90.470.10">
    <property type="entry name" value="Ribosomal protein L22/L17"/>
    <property type="match status" value="1"/>
</dbReference>
<dbReference type="HAMAP" id="MF_01331_B">
    <property type="entry name" value="Ribosomal_uL22_B"/>
    <property type="match status" value="1"/>
</dbReference>
<dbReference type="InterPro" id="IPR001063">
    <property type="entry name" value="Ribosomal_uL22"/>
</dbReference>
<dbReference type="InterPro" id="IPR005727">
    <property type="entry name" value="Ribosomal_uL22_bac/chlpt-type"/>
</dbReference>
<dbReference type="InterPro" id="IPR047867">
    <property type="entry name" value="Ribosomal_uL22_bac/org-type"/>
</dbReference>
<dbReference type="InterPro" id="IPR036394">
    <property type="entry name" value="Ribosomal_uL22_sf"/>
</dbReference>
<dbReference type="NCBIfam" id="TIGR01044">
    <property type="entry name" value="rplV_bact"/>
    <property type="match status" value="1"/>
</dbReference>
<dbReference type="PANTHER" id="PTHR13501">
    <property type="entry name" value="CHLOROPLAST 50S RIBOSOMAL PROTEIN L22-RELATED"/>
    <property type="match status" value="1"/>
</dbReference>
<dbReference type="PANTHER" id="PTHR13501:SF8">
    <property type="entry name" value="LARGE RIBOSOMAL SUBUNIT PROTEIN UL22M"/>
    <property type="match status" value="1"/>
</dbReference>
<dbReference type="Pfam" id="PF00237">
    <property type="entry name" value="Ribosomal_L22"/>
    <property type="match status" value="1"/>
</dbReference>
<dbReference type="SUPFAM" id="SSF54843">
    <property type="entry name" value="Ribosomal protein L22"/>
    <property type="match status" value="1"/>
</dbReference>
<proteinExistence type="inferred from homology"/>
<organism>
    <name type="scientific">Brucella abortus biovar 1 (strain 9-941)</name>
    <dbReference type="NCBI Taxonomy" id="262698"/>
    <lineage>
        <taxon>Bacteria</taxon>
        <taxon>Pseudomonadati</taxon>
        <taxon>Pseudomonadota</taxon>
        <taxon>Alphaproteobacteria</taxon>
        <taxon>Hyphomicrobiales</taxon>
        <taxon>Brucellaceae</taxon>
        <taxon>Brucella/Ochrobactrum group</taxon>
        <taxon>Brucella</taxon>
    </lineage>
</organism>
<keyword id="KW-0687">Ribonucleoprotein</keyword>
<keyword id="KW-0689">Ribosomal protein</keyword>
<keyword id="KW-0694">RNA-binding</keyword>
<keyword id="KW-0699">rRNA-binding</keyword>
<protein>
    <recommendedName>
        <fullName evidence="1">Large ribosomal subunit protein uL22</fullName>
    </recommendedName>
    <alternativeName>
        <fullName evidence="2">50S ribosomal protein L22</fullName>
    </alternativeName>
</protein>
<reference key="1">
    <citation type="journal article" date="2005" name="J. Bacteriol.">
        <title>Completion of the genome sequence of Brucella abortus and comparison to the highly similar genomes of Brucella melitensis and Brucella suis.</title>
        <authorList>
            <person name="Halling S.M."/>
            <person name="Peterson-Burch B.D."/>
            <person name="Bricker B.J."/>
            <person name="Zuerner R.L."/>
            <person name="Qing Z."/>
            <person name="Li L.-L."/>
            <person name="Kapur V."/>
            <person name="Alt D.P."/>
            <person name="Olsen S.C."/>
        </authorList>
    </citation>
    <scope>NUCLEOTIDE SEQUENCE [LARGE SCALE GENOMIC DNA]</scope>
    <source>
        <strain>9-941</strain>
    </source>
</reference>
<gene>
    <name evidence="1" type="primary">rplV</name>
    <name type="ordered locus">BruAb1_1233</name>
</gene>
<evidence type="ECO:0000255" key="1">
    <source>
        <dbReference type="HAMAP-Rule" id="MF_01331"/>
    </source>
</evidence>
<evidence type="ECO:0000305" key="2"/>
<feature type="chain" id="PRO_0000243128" description="Large ribosomal subunit protein uL22">
    <location>
        <begin position="1"/>
        <end position="129"/>
    </location>
</feature>
<sequence length="129" mass="14143">MGKAKAPRQLKDNEAKAVARTLRVSPQKLNLVASMIRGKKVNAALADLTFSRKRIAGTVKKTLESAIANAENNHDLDVDALIVAEAYVGKSIVMKRFHVRDRGRASRIEKPFSHLTIVVREVAEKGKAA</sequence>
<comment type="function">
    <text evidence="1">This protein binds specifically to 23S rRNA; its binding is stimulated by other ribosomal proteins, e.g. L4, L17, and L20. It is important during the early stages of 50S assembly. It makes multiple contacts with different domains of the 23S rRNA in the assembled 50S subunit and ribosome (By similarity).</text>
</comment>
<comment type="function">
    <text evidence="1">The globular domain of the protein is located near the polypeptide exit tunnel on the outside of the subunit, while an extended beta-hairpin is found that lines the wall of the exit tunnel in the center of the 70S ribosome.</text>
</comment>
<comment type="subunit">
    <text evidence="1">Part of the 50S ribosomal subunit.</text>
</comment>
<comment type="similarity">
    <text evidence="1">Belongs to the universal ribosomal protein uL22 family.</text>
</comment>